<feature type="chain" id="PRO_0000080486" description="Cyclin-L1">
    <location>
        <begin position="1"/>
        <end position="496"/>
    </location>
</feature>
<feature type="region of interest" description="Cyclin-like 1">
    <location>
        <begin position="68"/>
        <end position="170"/>
    </location>
</feature>
<feature type="region of interest" description="Cyclin-like 2">
    <location>
        <begin position="183"/>
        <end position="267"/>
    </location>
</feature>
<feature type="region of interest" description="Disordered" evidence="3">
    <location>
        <begin position="301"/>
        <end position="496"/>
    </location>
</feature>
<feature type="region of interest" description="RS">
    <location>
        <begin position="363"/>
        <end position="406"/>
    </location>
</feature>
<feature type="compositionally biased region" description="Basic and acidic residues" evidence="3">
    <location>
        <begin position="322"/>
        <end position="347"/>
    </location>
</feature>
<feature type="compositionally biased region" description="Basic residues" evidence="3">
    <location>
        <begin position="358"/>
        <end position="392"/>
    </location>
</feature>
<feature type="compositionally biased region" description="Basic residues" evidence="3">
    <location>
        <begin position="412"/>
        <end position="426"/>
    </location>
</feature>
<feature type="compositionally biased region" description="Basic residues" evidence="3">
    <location>
        <begin position="434"/>
        <end position="446"/>
    </location>
</feature>
<feature type="compositionally biased region" description="Basic residues" evidence="3">
    <location>
        <begin position="456"/>
        <end position="468"/>
    </location>
</feature>
<feature type="compositionally biased region" description="Basic and acidic residues" evidence="3">
    <location>
        <begin position="469"/>
        <end position="478"/>
    </location>
</feature>
<feature type="compositionally biased region" description="Basic residues" evidence="3">
    <location>
        <begin position="479"/>
        <end position="496"/>
    </location>
</feature>
<keyword id="KW-0195">Cyclin</keyword>
<keyword id="KW-0539">Nucleus</keyword>
<keyword id="KW-1185">Reference proteome</keyword>
<keyword id="KW-0677">Repeat</keyword>
<keyword id="KW-0804">Transcription</keyword>
<keyword id="KW-0805">Transcription regulation</keyword>
<evidence type="ECO:0000250" key="1"/>
<evidence type="ECO:0000250" key="2">
    <source>
        <dbReference type="UniProtKB" id="Q9UK58"/>
    </source>
</evidence>
<evidence type="ECO:0000256" key="3">
    <source>
        <dbReference type="SAM" id="MobiDB-lite"/>
    </source>
</evidence>
<evidence type="ECO:0000305" key="4"/>
<protein>
    <recommendedName>
        <fullName>Cyclin-L1</fullName>
    </recommendedName>
</protein>
<gene>
    <name type="primary">ccnl1</name>
</gene>
<organism>
    <name type="scientific">Xenopus laevis</name>
    <name type="common">African clawed frog</name>
    <dbReference type="NCBI Taxonomy" id="8355"/>
    <lineage>
        <taxon>Eukaryota</taxon>
        <taxon>Metazoa</taxon>
        <taxon>Chordata</taxon>
        <taxon>Craniata</taxon>
        <taxon>Vertebrata</taxon>
        <taxon>Euteleostomi</taxon>
        <taxon>Amphibia</taxon>
        <taxon>Batrachia</taxon>
        <taxon>Anura</taxon>
        <taxon>Pipoidea</taxon>
        <taxon>Pipidae</taxon>
        <taxon>Xenopodinae</taxon>
        <taxon>Xenopus</taxon>
        <taxon>Xenopus</taxon>
    </lineage>
</organism>
<sequence>MAAVPQLSAPSAPARSADGILIGDRQYSEVYLTIDYSLIPEERLSPTPSMSDGLDLNTETDLRILGCELIQSAGILLRLPQVAMATGQVLFHRFFYSKSFVKHSFEIIAMACINLASKIEEAPRRIRDVINVCHHLRQIRAKRTPSPLILDQSYINTKNHVIKAERRILKELGFCVHVKHPHKIIVMYLQVLECERNQTLVQTAWNYMNDCLRTNVFVRFDAETIACACIYLAARALQLSLPNRPHWFLLFGATEENIQDICITTLRLYSRIKPNYEFLEKEVDKRKVALQEAKLKAKGLNPDGTPAILSMGGFSPASKPSSPRDVKTEEKSPNFAKVKREMDDKQSSKSPYNGLRKENKRSRSVSRSRSRTKSRSRSHSPRRHYNNRRRSRSGTYSSRSRSRSRSHSESPRRHHNHGSPHMKLKHRVEDLRGRHAHKRKKSHSPSKSREPSELAKKHRHEHGHHRERRERSRSFERSHKNKHHGSSHSGHGRHRR</sequence>
<comment type="function">
    <text evidence="2">Involved in pre-mRNA splicing.</text>
</comment>
<comment type="subcellular location">
    <subcellularLocation>
        <location evidence="2">Nucleus speckle</location>
    </subcellularLocation>
    <subcellularLocation>
        <location evidence="2">Nucleus</location>
        <location evidence="2">Nucleoplasm</location>
    </subcellularLocation>
    <text evidence="2">Found in nuclear intrachromatin granules clusters (IGC), also called nuclear speckles, which are storage compartments for nuclear proteins involved in mRNA processing.</text>
</comment>
<comment type="domain">
    <text evidence="1">Contains a RS region (arginine-serine dipeptide repeat) within the C-terminal domain which is the hallmark of the SR family of splicing factors. This region probably plays a role in protein-protein interactions (By similarity).</text>
</comment>
<comment type="similarity">
    <text evidence="4">Belongs to the cyclin family. Cyclin L subfamily.</text>
</comment>
<comment type="sequence caution" evidence="4">
    <conflict type="erroneous initiation">
        <sequence resource="EMBL-CDS" id="AAH73707"/>
    </conflict>
</comment>
<comment type="sequence caution" evidence="4">
    <conflict type="erroneous initiation">
        <sequence resource="EMBL-CDS" id="AAH94084"/>
    </conflict>
</comment>
<accession>Q6GN15</accession>
<accession>Q52L35</accession>
<dbReference type="EMBL" id="BC073707">
    <property type="protein sequence ID" value="AAH73707.1"/>
    <property type="status" value="ALT_INIT"/>
    <property type="molecule type" value="mRNA"/>
</dbReference>
<dbReference type="EMBL" id="BC094084">
    <property type="protein sequence ID" value="AAH94084.1"/>
    <property type="status" value="ALT_INIT"/>
    <property type="molecule type" value="mRNA"/>
</dbReference>
<dbReference type="SMR" id="Q6GN15"/>
<dbReference type="AGR" id="Xenbase:XB-GENE-17338793"/>
<dbReference type="Xenbase" id="XB-GENE-17338793">
    <property type="gene designation" value="ccnl1.S"/>
</dbReference>
<dbReference type="Proteomes" id="UP000186698">
    <property type="component" value="Unplaced"/>
</dbReference>
<dbReference type="GO" id="GO:0016607">
    <property type="term" value="C:nuclear speck"/>
    <property type="evidence" value="ECO:0007669"/>
    <property type="project" value="UniProtKB-SubCell"/>
</dbReference>
<dbReference type="GO" id="GO:0005634">
    <property type="term" value="C:nucleus"/>
    <property type="evidence" value="ECO:0000318"/>
    <property type="project" value="GO_Central"/>
</dbReference>
<dbReference type="GO" id="GO:0016538">
    <property type="term" value="F:cyclin-dependent protein serine/threonine kinase regulator activity"/>
    <property type="evidence" value="ECO:0000318"/>
    <property type="project" value="GO_Central"/>
</dbReference>
<dbReference type="GO" id="GO:0006357">
    <property type="term" value="P:regulation of transcription by RNA polymerase II"/>
    <property type="evidence" value="ECO:0007669"/>
    <property type="project" value="InterPro"/>
</dbReference>
<dbReference type="CDD" id="cd20592">
    <property type="entry name" value="CYCLIN_CCNL1_rpt2"/>
    <property type="match status" value="1"/>
</dbReference>
<dbReference type="FunFam" id="1.10.472.10:FF:000014">
    <property type="entry name" value="cyclin-L1 isoform X1"/>
    <property type="match status" value="1"/>
</dbReference>
<dbReference type="FunFam" id="1.10.472.10:FF:000016">
    <property type="entry name" value="cyclin-L1 isoform X1"/>
    <property type="match status" value="1"/>
</dbReference>
<dbReference type="Gene3D" id="1.10.472.10">
    <property type="entry name" value="Cyclin-like"/>
    <property type="match status" value="2"/>
</dbReference>
<dbReference type="InterPro" id="IPR013763">
    <property type="entry name" value="Cyclin-like_dom"/>
</dbReference>
<dbReference type="InterPro" id="IPR036915">
    <property type="entry name" value="Cyclin-like_sf"/>
</dbReference>
<dbReference type="InterPro" id="IPR043198">
    <property type="entry name" value="Cyclin/Ssn8"/>
</dbReference>
<dbReference type="InterPro" id="IPR004367">
    <property type="entry name" value="Cyclin_C-dom"/>
</dbReference>
<dbReference type="InterPro" id="IPR006671">
    <property type="entry name" value="Cyclin_N"/>
</dbReference>
<dbReference type="PANTHER" id="PTHR10026">
    <property type="entry name" value="CYCLIN"/>
    <property type="match status" value="1"/>
</dbReference>
<dbReference type="Pfam" id="PF00134">
    <property type="entry name" value="Cyclin_N"/>
    <property type="match status" value="1"/>
</dbReference>
<dbReference type="PIRSF" id="PIRSF036580">
    <property type="entry name" value="Cyclin_L"/>
    <property type="match status" value="1"/>
</dbReference>
<dbReference type="SMART" id="SM00385">
    <property type="entry name" value="CYCLIN"/>
    <property type="match status" value="2"/>
</dbReference>
<dbReference type="SMART" id="SM01332">
    <property type="entry name" value="Cyclin_C"/>
    <property type="match status" value="1"/>
</dbReference>
<dbReference type="SUPFAM" id="SSF47954">
    <property type="entry name" value="Cyclin-like"/>
    <property type="match status" value="2"/>
</dbReference>
<name>CCNL1_XENLA</name>
<proteinExistence type="evidence at transcript level"/>
<reference key="1">
    <citation type="submission" date="2004-06" db="EMBL/GenBank/DDBJ databases">
        <authorList>
            <consortium name="NIH - Xenopus Gene Collection (XGC) project"/>
        </authorList>
    </citation>
    <scope>NUCLEOTIDE SEQUENCE [LARGE SCALE MRNA]</scope>
    <source>
        <tissue>Oocyte</tissue>
    </source>
</reference>